<gene>
    <name evidence="1" type="primary">murC</name>
    <name type="ordered locus">BMA10229_A1330</name>
</gene>
<reference key="1">
    <citation type="journal article" date="2010" name="Genome Biol. Evol.">
        <title>Continuing evolution of Burkholderia mallei through genome reduction and large-scale rearrangements.</title>
        <authorList>
            <person name="Losada L."/>
            <person name="Ronning C.M."/>
            <person name="DeShazer D."/>
            <person name="Woods D."/>
            <person name="Fedorova N."/>
            <person name="Kim H.S."/>
            <person name="Shabalina S.A."/>
            <person name="Pearson T.R."/>
            <person name="Brinkac L."/>
            <person name="Tan P."/>
            <person name="Nandi T."/>
            <person name="Crabtree J."/>
            <person name="Badger J."/>
            <person name="Beckstrom-Sternberg S."/>
            <person name="Saqib M."/>
            <person name="Schutzer S.E."/>
            <person name="Keim P."/>
            <person name="Nierman W.C."/>
        </authorList>
    </citation>
    <scope>NUCLEOTIDE SEQUENCE [LARGE SCALE GENOMIC DNA]</scope>
    <source>
        <strain>NCTC 10229</strain>
    </source>
</reference>
<accession>A2S5U4</accession>
<name>MURC_BURM9</name>
<protein>
    <recommendedName>
        <fullName evidence="1">UDP-N-acetylmuramate--L-alanine ligase</fullName>
        <ecNumber evidence="1">6.3.2.8</ecNumber>
    </recommendedName>
    <alternativeName>
        <fullName evidence="1">UDP-N-acetylmuramoyl-L-alanine synthetase</fullName>
    </alternativeName>
</protein>
<feature type="chain" id="PRO_1000004321" description="UDP-N-acetylmuramate--L-alanine ligase">
    <location>
        <begin position="1"/>
        <end position="465"/>
    </location>
</feature>
<feature type="binding site" evidence="1">
    <location>
        <begin position="112"/>
        <end position="118"/>
    </location>
    <ligand>
        <name>ATP</name>
        <dbReference type="ChEBI" id="CHEBI:30616"/>
    </ligand>
</feature>
<dbReference type="EC" id="6.3.2.8" evidence="1"/>
<dbReference type="EMBL" id="CP000546">
    <property type="protein sequence ID" value="ABN02079.1"/>
    <property type="molecule type" value="Genomic_DNA"/>
</dbReference>
<dbReference type="RefSeq" id="WP_004194319.1">
    <property type="nucleotide sequence ID" value="NC_008836.1"/>
</dbReference>
<dbReference type="SMR" id="A2S5U4"/>
<dbReference type="GeneID" id="92980242"/>
<dbReference type="KEGG" id="bml:BMA10229_A1330"/>
<dbReference type="HOGENOM" id="CLU_028104_2_2_4"/>
<dbReference type="UniPathway" id="UPA00219"/>
<dbReference type="Proteomes" id="UP000002283">
    <property type="component" value="Chromosome I"/>
</dbReference>
<dbReference type="GO" id="GO:0005737">
    <property type="term" value="C:cytoplasm"/>
    <property type="evidence" value="ECO:0007669"/>
    <property type="project" value="UniProtKB-SubCell"/>
</dbReference>
<dbReference type="GO" id="GO:0005524">
    <property type="term" value="F:ATP binding"/>
    <property type="evidence" value="ECO:0007669"/>
    <property type="project" value="UniProtKB-UniRule"/>
</dbReference>
<dbReference type="GO" id="GO:0008763">
    <property type="term" value="F:UDP-N-acetylmuramate-L-alanine ligase activity"/>
    <property type="evidence" value="ECO:0007669"/>
    <property type="project" value="UniProtKB-UniRule"/>
</dbReference>
<dbReference type="GO" id="GO:0051301">
    <property type="term" value="P:cell division"/>
    <property type="evidence" value="ECO:0007669"/>
    <property type="project" value="UniProtKB-KW"/>
</dbReference>
<dbReference type="GO" id="GO:0071555">
    <property type="term" value="P:cell wall organization"/>
    <property type="evidence" value="ECO:0007669"/>
    <property type="project" value="UniProtKB-KW"/>
</dbReference>
<dbReference type="GO" id="GO:0009252">
    <property type="term" value="P:peptidoglycan biosynthetic process"/>
    <property type="evidence" value="ECO:0007669"/>
    <property type="project" value="UniProtKB-UniRule"/>
</dbReference>
<dbReference type="GO" id="GO:0008360">
    <property type="term" value="P:regulation of cell shape"/>
    <property type="evidence" value="ECO:0007669"/>
    <property type="project" value="UniProtKB-KW"/>
</dbReference>
<dbReference type="FunFam" id="3.40.1190.10:FF:000001">
    <property type="entry name" value="UDP-N-acetylmuramate--L-alanine ligase"/>
    <property type="match status" value="1"/>
</dbReference>
<dbReference type="Gene3D" id="3.90.190.20">
    <property type="entry name" value="Mur ligase, C-terminal domain"/>
    <property type="match status" value="1"/>
</dbReference>
<dbReference type="Gene3D" id="3.40.1190.10">
    <property type="entry name" value="Mur-like, catalytic domain"/>
    <property type="match status" value="1"/>
</dbReference>
<dbReference type="Gene3D" id="3.40.50.720">
    <property type="entry name" value="NAD(P)-binding Rossmann-like Domain"/>
    <property type="match status" value="1"/>
</dbReference>
<dbReference type="HAMAP" id="MF_00046">
    <property type="entry name" value="MurC"/>
    <property type="match status" value="1"/>
</dbReference>
<dbReference type="InterPro" id="IPR036565">
    <property type="entry name" value="Mur-like_cat_sf"/>
</dbReference>
<dbReference type="InterPro" id="IPR004101">
    <property type="entry name" value="Mur_ligase_C"/>
</dbReference>
<dbReference type="InterPro" id="IPR036615">
    <property type="entry name" value="Mur_ligase_C_dom_sf"/>
</dbReference>
<dbReference type="InterPro" id="IPR013221">
    <property type="entry name" value="Mur_ligase_cen"/>
</dbReference>
<dbReference type="InterPro" id="IPR000713">
    <property type="entry name" value="Mur_ligase_N"/>
</dbReference>
<dbReference type="InterPro" id="IPR050061">
    <property type="entry name" value="MurCDEF_pg_biosynth"/>
</dbReference>
<dbReference type="InterPro" id="IPR005758">
    <property type="entry name" value="UDP-N-AcMur_Ala_ligase_MurC"/>
</dbReference>
<dbReference type="NCBIfam" id="TIGR01082">
    <property type="entry name" value="murC"/>
    <property type="match status" value="1"/>
</dbReference>
<dbReference type="PANTHER" id="PTHR43445:SF3">
    <property type="entry name" value="UDP-N-ACETYLMURAMATE--L-ALANINE LIGASE"/>
    <property type="match status" value="1"/>
</dbReference>
<dbReference type="PANTHER" id="PTHR43445">
    <property type="entry name" value="UDP-N-ACETYLMURAMATE--L-ALANINE LIGASE-RELATED"/>
    <property type="match status" value="1"/>
</dbReference>
<dbReference type="Pfam" id="PF01225">
    <property type="entry name" value="Mur_ligase"/>
    <property type="match status" value="1"/>
</dbReference>
<dbReference type="Pfam" id="PF02875">
    <property type="entry name" value="Mur_ligase_C"/>
    <property type="match status" value="1"/>
</dbReference>
<dbReference type="Pfam" id="PF08245">
    <property type="entry name" value="Mur_ligase_M"/>
    <property type="match status" value="1"/>
</dbReference>
<dbReference type="SUPFAM" id="SSF51984">
    <property type="entry name" value="MurCD N-terminal domain"/>
    <property type="match status" value="1"/>
</dbReference>
<dbReference type="SUPFAM" id="SSF53623">
    <property type="entry name" value="MurD-like peptide ligases, catalytic domain"/>
    <property type="match status" value="1"/>
</dbReference>
<dbReference type="SUPFAM" id="SSF53244">
    <property type="entry name" value="MurD-like peptide ligases, peptide-binding domain"/>
    <property type="match status" value="1"/>
</dbReference>
<proteinExistence type="inferred from homology"/>
<organism>
    <name type="scientific">Burkholderia mallei (strain NCTC 10229)</name>
    <dbReference type="NCBI Taxonomy" id="412022"/>
    <lineage>
        <taxon>Bacteria</taxon>
        <taxon>Pseudomonadati</taxon>
        <taxon>Pseudomonadota</taxon>
        <taxon>Betaproteobacteria</taxon>
        <taxon>Burkholderiales</taxon>
        <taxon>Burkholderiaceae</taxon>
        <taxon>Burkholderia</taxon>
        <taxon>pseudomallei group</taxon>
    </lineage>
</organism>
<sequence length="465" mass="49056">MKHIVKHIHFVGIGGAGMSGIAEVLVNLGYQVSGSDLARNAVTERLEALGARVSIGHDAANIEGANAVVVSTAVRSDNPEVLAARRLRVPIVPRAVMLAELMRLKQGIAIAGTHGKTTTTSLVASVLAAGGLDPTFVIGGRLTSAGANARLGMGDFIVAEADESDASFLNLYPVIEVITNIDADHMDTYGHDFARLKQAFIEFTQRLPFYGSAVVCIDDANVRQIVPLISKPVVRYGFAADAQVRAENVEARDGRMHFTVRREGREPLPVVLNLPGLHNVQNALAAIAIATDLDVADAAIQQALAEFNGVGRRFQRYGEIAAAGGGAYTLIDDYGHHPVEMAATIAAARGAFPGRRLVLAFQPHRYTRTRDCFDDFVNVLSTVDALVLTEVYAAGEAPISTANGDALSRALRAAGKVEPVFVATVDEVPDALAKLARDGDVVITMGAGSIGGVPGKLAQDTQQKG</sequence>
<evidence type="ECO:0000255" key="1">
    <source>
        <dbReference type="HAMAP-Rule" id="MF_00046"/>
    </source>
</evidence>
<keyword id="KW-0067">ATP-binding</keyword>
<keyword id="KW-0131">Cell cycle</keyword>
<keyword id="KW-0132">Cell division</keyword>
<keyword id="KW-0133">Cell shape</keyword>
<keyword id="KW-0961">Cell wall biogenesis/degradation</keyword>
<keyword id="KW-0963">Cytoplasm</keyword>
<keyword id="KW-0436">Ligase</keyword>
<keyword id="KW-0547">Nucleotide-binding</keyword>
<keyword id="KW-0573">Peptidoglycan synthesis</keyword>
<comment type="function">
    <text evidence="1">Cell wall formation.</text>
</comment>
<comment type="catalytic activity">
    <reaction evidence="1">
        <text>UDP-N-acetyl-alpha-D-muramate + L-alanine + ATP = UDP-N-acetyl-alpha-D-muramoyl-L-alanine + ADP + phosphate + H(+)</text>
        <dbReference type="Rhea" id="RHEA:23372"/>
        <dbReference type="ChEBI" id="CHEBI:15378"/>
        <dbReference type="ChEBI" id="CHEBI:30616"/>
        <dbReference type="ChEBI" id="CHEBI:43474"/>
        <dbReference type="ChEBI" id="CHEBI:57972"/>
        <dbReference type="ChEBI" id="CHEBI:70757"/>
        <dbReference type="ChEBI" id="CHEBI:83898"/>
        <dbReference type="ChEBI" id="CHEBI:456216"/>
        <dbReference type="EC" id="6.3.2.8"/>
    </reaction>
</comment>
<comment type="pathway">
    <text evidence="1">Cell wall biogenesis; peptidoglycan biosynthesis.</text>
</comment>
<comment type="subcellular location">
    <subcellularLocation>
        <location evidence="1">Cytoplasm</location>
    </subcellularLocation>
</comment>
<comment type="similarity">
    <text evidence="1">Belongs to the MurCDEF family.</text>
</comment>